<keyword id="KW-0002">3D-structure</keyword>
<keyword id="KW-0963">Cytoplasm</keyword>
<keyword id="KW-0275">Fatty acid biosynthesis</keyword>
<keyword id="KW-0276">Fatty acid metabolism</keyword>
<keyword id="KW-0285">Flavoprotein</keyword>
<keyword id="KW-0288">FMN</keyword>
<keyword id="KW-0444">Lipid biosynthesis</keyword>
<keyword id="KW-0443">Lipid metabolism</keyword>
<keyword id="KW-0521">NADP</keyword>
<keyword id="KW-0560">Oxidoreductase</keyword>
<keyword id="KW-0925">Oxylipin biosynthesis</keyword>
<keyword id="KW-1185">Reference proteome</keyword>
<evidence type="ECO:0000250" key="1"/>
<evidence type="ECO:0000269" key="2">
    <source>
    </source>
</evidence>
<evidence type="ECO:0000269" key="3">
    <source>
    </source>
</evidence>
<evidence type="ECO:0000269" key="4">
    <source>
    </source>
</evidence>
<evidence type="ECO:0000269" key="5">
    <source>
    </source>
</evidence>
<evidence type="ECO:0000305" key="6"/>
<evidence type="ECO:0007829" key="7">
    <source>
        <dbReference type="PDB" id="1ICP"/>
    </source>
</evidence>
<evidence type="ECO:0007829" key="8">
    <source>
        <dbReference type="PDB" id="1ICQ"/>
    </source>
</evidence>
<gene>
    <name type="primary">OPR1</name>
</gene>
<protein>
    <recommendedName>
        <fullName>12-oxophytodienoate reductase 1</fullName>
        <ecNumber>1.3.1.42</ecNumber>
    </recommendedName>
    <alternativeName>
        <fullName>12-oxophytodienoate-10,11-reductase 1</fullName>
        <shortName>OPDA-reductase 1</shortName>
    </alternativeName>
    <alternativeName>
        <fullName>LeOPR1</fullName>
    </alternativeName>
</protein>
<proteinExistence type="evidence at protein level"/>
<reference key="1">
    <citation type="journal article" date="1999" name="J. Biol. Chem.">
        <title>A homolog of old yellow enzyme in tomato: spectral properties and substrate specificity of the recombinant protein.</title>
        <authorList>
            <person name="Strassner J."/>
            <person name="Fuerholz A."/>
            <person name="Macheroux P."/>
            <person name="Amrhein N."/>
            <person name="Schaller A."/>
        </authorList>
    </citation>
    <scope>NUCLEOTIDE SEQUENCE [MRNA]</scope>
    <scope>TISSUE SPECIFICITY</scope>
    <scope>CATALYTIC ACTIVITY</scope>
    <source>
        <strain>cv. Castlemart II</strain>
        <tissue>Shoot</tissue>
    </source>
</reference>
<reference key="2">
    <citation type="journal article" date="2002" name="Plant J.">
        <title>Characterization and cDNA-microarray expression analysis of 12-oxophytodienoate reductases reveals differential roles for octadecanoid biosynthesis in the local versus the systemic wound response.</title>
        <authorList>
            <person name="Strassner J."/>
            <person name="Schaller F."/>
            <person name="Frick U.B."/>
            <person name="Howe G.A."/>
            <person name="Weiler E.W."/>
            <person name="Amrhein N."/>
            <person name="Macheroux P."/>
            <person name="Schaller A."/>
        </authorList>
    </citation>
    <scope>FUNCTION</scope>
    <scope>COFACTOR</scope>
    <scope>SUBSTRATE SPECIFICITY</scope>
    <scope>SUBCELLULAR LOCATION</scope>
    <source>
        <strain>cv. Castlemart II</strain>
        <tissue>Shoot</tissue>
    </source>
</reference>
<reference key="3">
    <citation type="journal article" date="2001" name="Structure">
        <title>X-ray structure of 12-oxophytodienoate reductase 1 provides structural insight into substrate binding and specificity within the family of OYE.</title>
        <authorList>
            <person name="Breithaupt C."/>
            <person name="Strassner J."/>
            <person name="Breitinger U."/>
            <person name="Huber R."/>
            <person name="Macheroux P."/>
            <person name="Schaller A."/>
            <person name="Clausen T."/>
        </authorList>
    </citation>
    <scope>X-RAY CRYSTALLOGRAPHY (1.9 ANGSTROMS) IN COMPLEX WITH SUBSTRATE</scope>
    <scope>SUBSTRATE SPECIFICITY</scope>
    <scope>COFACTOR-BINDING</scope>
</reference>
<reference key="4">
    <citation type="journal article" date="2009" name="J. Mol. Biol.">
        <title>Structural basis of substrate specificity of plant 12-oxophytodienoate reductases.</title>
        <authorList>
            <person name="Breithaupt C."/>
            <person name="Kurzbauer R."/>
            <person name="Schaller F."/>
            <person name="Stintzi A."/>
            <person name="Schaller A."/>
            <person name="Huber R."/>
            <person name="Macheroux P."/>
            <person name="Clausen T."/>
        </authorList>
    </citation>
    <scope>X-RAY CRYSTALLOGRAPHY (2.30 ANGSTROMS) IN COMPLEX WITH FMN</scope>
</reference>
<feature type="chain" id="PRO_0000194488" description="12-oxophytodienoate reductase 1">
    <location>
        <begin position="1"/>
        <end position="376"/>
    </location>
</feature>
<feature type="active site" description="Proton donor">
    <location>
        <position position="192"/>
    </location>
</feature>
<feature type="binding site" evidence="5">
    <location>
        <begin position="35"/>
        <end position="37"/>
    </location>
    <ligand>
        <name>FMN</name>
        <dbReference type="ChEBI" id="CHEBI:58210"/>
    </ligand>
</feature>
<feature type="binding site" evidence="5">
    <location>
        <position position="68"/>
    </location>
    <ligand>
        <name>FMN</name>
        <dbReference type="ChEBI" id="CHEBI:58210"/>
    </ligand>
</feature>
<feature type="binding site" evidence="5">
    <location>
        <position position="110"/>
    </location>
    <ligand>
        <name>FMN</name>
        <dbReference type="ChEBI" id="CHEBI:58210"/>
    </ligand>
</feature>
<feature type="binding site" evidence="3">
    <location>
        <position position="143"/>
    </location>
    <ligand>
        <name>substrate</name>
    </ligand>
</feature>
<feature type="binding site">
    <location>
        <begin position="187"/>
        <end position="190"/>
    </location>
    <ligand>
        <name>substrate</name>
    </ligand>
</feature>
<feature type="binding site" evidence="5">
    <location>
        <position position="239"/>
    </location>
    <ligand>
        <name>FMN</name>
        <dbReference type="ChEBI" id="CHEBI:58210"/>
    </ligand>
</feature>
<feature type="binding site" evidence="1">
    <location>
        <position position="279"/>
    </location>
    <ligand>
        <name>substrate</name>
    </ligand>
</feature>
<feature type="binding site" evidence="5">
    <location>
        <position position="309"/>
    </location>
    <ligand>
        <name>FMN</name>
        <dbReference type="ChEBI" id="CHEBI:58210"/>
    </ligand>
</feature>
<feature type="binding site" evidence="5">
    <location>
        <begin position="330"/>
        <end position="331"/>
    </location>
    <ligand>
        <name>FMN</name>
        <dbReference type="ChEBI" id="CHEBI:58210"/>
    </ligand>
</feature>
<feature type="helix" evidence="7">
    <location>
        <begin position="15"/>
        <end position="17"/>
    </location>
</feature>
<feature type="strand" evidence="7">
    <location>
        <begin position="20"/>
        <end position="22"/>
    </location>
</feature>
<feature type="strand" evidence="7">
    <location>
        <begin position="25"/>
        <end position="28"/>
    </location>
</feature>
<feature type="strand" evidence="7">
    <location>
        <begin position="30"/>
        <end position="33"/>
    </location>
</feature>
<feature type="helix" evidence="7">
    <location>
        <begin position="42"/>
        <end position="44"/>
    </location>
</feature>
<feature type="helix" evidence="7">
    <location>
        <begin position="48"/>
        <end position="56"/>
    </location>
</feature>
<feature type="strand" evidence="7">
    <location>
        <begin position="63"/>
        <end position="65"/>
    </location>
</feature>
<feature type="strand" evidence="8">
    <location>
        <begin position="69"/>
        <end position="72"/>
    </location>
</feature>
<feature type="helix" evidence="7">
    <location>
        <begin position="73"/>
        <end position="75"/>
    </location>
</feature>
<feature type="helix" evidence="7">
    <location>
        <begin position="87"/>
        <end position="102"/>
    </location>
</feature>
<feature type="strand" evidence="7">
    <location>
        <begin position="106"/>
        <end position="112"/>
    </location>
</feature>
<feature type="turn" evidence="7">
    <location>
        <begin position="120"/>
        <end position="122"/>
    </location>
</feature>
<feature type="helix" evidence="7">
    <location>
        <begin position="124"/>
        <end position="126"/>
    </location>
</feature>
<feature type="strand" evidence="7">
    <location>
        <begin position="130"/>
        <end position="134"/>
    </location>
</feature>
<feature type="strand" evidence="8">
    <location>
        <begin position="145"/>
        <end position="149"/>
    </location>
</feature>
<feature type="turn" evidence="7">
    <location>
        <begin position="159"/>
        <end position="161"/>
    </location>
</feature>
<feature type="helix" evidence="7">
    <location>
        <begin position="162"/>
        <end position="178"/>
    </location>
</feature>
<feature type="strand" evidence="7">
    <location>
        <begin position="182"/>
        <end position="188"/>
    </location>
</feature>
<feature type="helix" evidence="7">
    <location>
        <begin position="193"/>
        <end position="198"/>
    </location>
</feature>
<feature type="turn" evidence="7">
    <location>
        <begin position="200"/>
        <end position="202"/>
    </location>
</feature>
<feature type="strand" evidence="7">
    <location>
        <begin position="210"/>
        <end position="212"/>
    </location>
</feature>
<feature type="helix" evidence="7">
    <location>
        <begin position="213"/>
        <end position="231"/>
    </location>
</feature>
<feature type="helix" evidence="7">
    <location>
        <begin position="233"/>
        <end position="235"/>
    </location>
</feature>
<feature type="strand" evidence="7">
    <location>
        <begin position="236"/>
        <end position="240"/>
    </location>
</feature>
<feature type="turn" evidence="7">
    <location>
        <begin position="246"/>
        <end position="248"/>
    </location>
</feature>
<feature type="helix" evidence="7">
    <location>
        <begin position="254"/>
        <end position="265"/>
    </location>
</feature>
<feature type="helix" evidence="7">
    <location>
        <begin position="266"/>
        <end position="268"/>
    </location>
</feature>
<feature type="strand" evidence="7">
    <location>
        <begin position="271"/>
        <end position="276"/>
    </location>
</feature>
<feature type="helix" evidence="7">
    <location>
        <begin position="294"/>
        <end position="299"/>
    </location>
</feature>
<feature type="strand" evidence="7">
    <location>
        <begin position="304"/>
        <end position="309"/>
    </location>
</feature>
<feature type="helix" evidence="7">
    <location>
        <begin position="312"/>
        <end position="320"/>
    </location>
</feature>
<feature type="strand" evidence="7">
    <location>
        <begin position="325"/>
        <end position="330"/>
    </location>
</feature>
<feature type="helix" evidence="7">
    <location>
        <begin position="331"/>
        <end position="335"/>
    </location>
</feature>
<feature type="helix" evidence="7">
    <location>
        <begin position="339"/>
        <end position="345"/>
    </location>
</feature>
<feature type="helix" evidence="7">
    <location>
        <begin position="354"/>
        <end position="356"/>
    </location>
</feature>
<feature type="turn" evidence="7">
    <location>
        <begin position="364"/>
        <end position="366"/>
    </location>
</feature>
<comment type="function">
    <text evidence="4">Specifically cleaves olefinic bonds in alpha,beta-unsaturated carbonyls and may be involved in detoxification or modification of these reactive compounds. May be involved in the biosynthesis or metabolism of oxylipin signaling molecules. In vitro, reduces 9R,13R-12-oxophyodienoic acid (9R,13R-OPDA) to 9R,13R-OPC-8:0, but not 9S,13S-OPDA, the natural precursor of jasmonic acid. Also reduces N-ethylmaleimide and maleic acid.</text>
</comment>
<comment type="catalytic activity">
    <reaction evidence="2">
        <text>(1S,2S)-OPC-8 + NADP(+) = (9S,13S,15Z)-12-oxophyto-10,15-dienoate + NADPH + H(+)</text>
        <dbReference type="Rhea" id="RHEA:21888"/>
        <dbReference type="ChEBI" id="CHEBI:15378"/>
        <dbReference type="ChEBI" id="CHEBI:57411"/>
        <dbReference type="ChEBI" id="CHEBI:57783"/>
        <dbReference type="ChEBI" id="CHEBI:58349"/>
        <dbReference type="ChEBI" id="CHEBI:191855"/>
        <dbReference type="EC" id="1.3.1.42"/>
    </reaction>
</comment>
<comment type="cofactor">
    <cofactor evidence="3 4">
        <name>FMN</name>
        <dbReference type="ChEBI" id="CHEBI:58210"/>
    </cofactor>
</comment>
<comment type="biophysicochemical properties">
    <kinetics>
        <KM>8 uM for N-ethylmaleimide (at pH 7.0 and 25 degrees Celsius)</KM>
        <KM>47 uM for maleic acid (at pH 7.0 and 25 degrees Celsius)</KM>
        <KM>15 uM for OPDA (at pH 7.0 and 25 degrees Celsius)</KM>
        <text>The highest catalytic efficiency was observed with N-ethylmaleimide.</text>
    </kinetics>
</comment>
<comment type="pathway">
    <text>Lipid metabolism; oxylipin biosynthesis.</text>
</comment>
<comment type="subcellular location">
    <subcellularLocation>
        <location evidence="4">Cytoplasm</location>
    </subcellularLocation>
</comment>
<comment type="tissue specificity">
    <text evidence="2">Constitutively expressed in roots, leaves, cotyledons, cells culture and to a lower extent in flowers.</text>
</comment>
<comment type="induction">
    <text>Seems to not be influenced by wounding.</text>
</comment>
<comment type="similarity">
    <text evidence="6">Belongs to the NADH:flavin oxidoreductase/NADH oxidase family.</text>
</comment>
<organism>
    <name type="scientific">Solanum lycopersicum</name>
    <name type="common">Tomato</name>
    <name type="synonym">Lycopersicon esculentum</name>
    <dbReference type="NCBI Taxonomy" id="4081"/>
    <lineage>
        <taxon>Eukaryota</taxon>
        <taxon>Viridiplantae</taxon>
        <taxon>Streptophyta</taxon>
        <taxon>Embryophyta</taxon>
        <taxon>Tracheophyta</taxon>
        <taxon>Spermatophyta</taxon>
        <taxon>Magnoliopsida</taxon>
        <taxon>eudicotyledons</taxon>
        <taxon>Gunneridae</taxon>
        <taxon>Pentapetalae</taxon>
        <taxon>asterids</taxon>
        <taxon>lamiids</taxon>
        <taxon>Solanales</taxon>
        <taxon>Solanaceae</taxon>
        <taxon>Solanoideae</taxon>
        <taxon>Solaneae</taxon>
        <taxon>Solanum</taxon>
        <taxon>Solanum subgen. Lycopersicon</taxon>
    </lineage>
</organism>
<name>OPR1_SOLLC</name>
<dbReference type="EC" id="1.3.1.42"/>
<dbReference type="EMBL" id="AJ242551">
    <property type="protein sequence ID" value="CAB43506.1"/>
    <property type="molecule type" value="mRNA"/>
</dbReference>
<dbReference type="RefSeq" id="NP_001234781.1">
    <property type="nucleotide sequence ID" value="NM_001247852.1"/>
</dbReference>
<dbReference type="PDB" id="1ICP">
    <property type="method" value="X-ray"/>
    <property type="resolution" value="1.90 A"/>
    <property type="chains" value="A/B=1-376"/>
</dbReference>
<dbReference type="PDB" id="1ICQ">
    <property type="method" value="X-ray"/>
    <property type="resolution" value="2.00 A"/>
    <property type="chains" value="A/B=1-376"/>
</dbReference>
<dbReference type="PDB" id="1ICS">
    <property type="method" value="X-ray"/>
    <property type="resolution" value="2.30 A"/>
    <property type="chains" value="A/B=1-376"/>
</dbReference>
<dbReference type="PDB" id="3HGR">
    <property type="method" value="X-ray"/>
    <property type="resolution" value="2.30 A"/>
    <property type="chains" value="A/B=1-376"/>
</dbReference>
<dbReference type="PDBsum" id="1ICP"/>
<dbReference type="PDBsum" id="1ICQ"/>
<dbReference type="PDBsum" id="1ICS"/>
<dbReference type="PDBsum" id="3HGR"/>
<dbReference type="SMR" id="Q9XG54"/>
<dbReference type="FunCoup" id="Q9XG54">
    <property type="interactions" value="325"/>
</dbReference>
<dbReference type="STRING" id="4081.Q9XG54"/>
<dbReference type="PaxDb" id="4081-Solyc10g086220.1.1"/>
<dbReference type="EnsemblPlants" id="Solyc10g086220.2.1">
    <property type="protein sequence ID" value="Solyc10g086220.2.1"/>
    <property type="gene ID" value="Solyc10g086220.2"/>
</dbReference>
<dbReference type="GeneID" id="544239"/>
<dbReference type="Gramene" id="Solyc10g086220.2.1">
    <property type="protein sequence ID" value="Solyc10g086220.2.1"/>
    <property type="gene ID" value="Solyc10g086220.2"/>
</dbReference>
<dbReference type="KEGG" id="sly:544239"/>
<dbReference type="eggNOG" id="KOG0134">
    <property type="taxonomic scope" value="Eukaryota"/>
</dbReference>
<dbReference type="HOGENOM" id="CLU_012153_0_0_1"/>
<dbReference type="InParanoid" id="Q9XG54"/>
<dbReference type="OMA" id="PEKRCKF"/>
<dbReference type="OrthoDB" id="1663137at2759"/>
<dbReference type="PhylomeDB" id="Q9XG54"/>
<dbReference type="BRENDA" id="1.3.1.42">
    <property type="organism ID" value="3101"/>
</dbReference>
<dbReference type="UniPathway" id="UPA00382"/>
<dbReference type="EvolutionaryTrace" id="Q9XG54"/>
<dbReference type="Proteomes" id="UP000004994">
    <property type="component" value="Chromosome 10"/>
</dbReference>
<dbReference type="ExpressionAtlas" id="Q9XG54">
    <property type="expression patterns" value="baseline and differential"/>
</dbReference>
<dbReference type="GO" id="GO:0005737">
    <property type="term" value="C:cytoplasm"/>
    <property type="evidence" value="ECO:0007669"/>
    <property type="project" value="UniProtKB-SubCell"/>
</dbReference>
<dbReference type="GO" id="GO:0016629">
    <property type="term" value="F:12-oxophytodienoate reductase activity"/>
    <property type="evidence" value="ECO:0007669"/>
    <property type="project" value="UniProtKB-EC"/>
</dbReference>
<dbReference type="GO" id="GO:0010181">
    <property type="term" value="F:FMN binding"/>
    <property type="evidence" value="ECO:0007669"/>
    <property type="project" value="InterPro"/>
</dbReference>
<dbReference type="GO" id="GO:0016491">
    <property type="term" value="F:oxidoreductase activity"/>
    <property type="evidence" value="ECO:0000318"/>
    <property type="project" value="GO_Central"/>
</dbReference>
<dbReference type="GO" id="GO:0006633">
    <property type="term" value="P:fatty acid biosynthetic process"/>
    <property type="evidence" value="ECO:0007669"/>
    <property type="project" value="UniProtKB-KW"/>
</dbReference>
<dbReference type="GO" id="GO:0031408">
    <property type="term" value="P:oxylipin biosynthetic process"/>
    <property type="evidence" value="ECO:0007669"/>
    <property type="project" value="UniProtKB-UniPathway"/>
</dbReference>
<dbReference type="CDD" id="cd02933">
    <property type="entry name" value="OYE_like_FMN"/>
    <property type="match status" value="1"/>
</dbReference>
<dbReference type="FunFam" id="3.20.20.70:FF:000073">
    <property type="entry name" value="12-oxophytodienoate reductase 3"/>
    <property type="match status" value="1"/>
</dbReference>
<dbReference type="Gene3D" id="3.20.20.70">
    <property type="entry name" value="Aldolase class I"/>
    <property type="match status" value="1"/>
</dbReference>
<dbReference type="InterPro" id="IPR013785">
    <property type="entry name" value="Aldolase_TIM"/>
</dbReference>
<dbReference type="InterPro" id="IPR001155">
    <property type="entry name" value="OxRdtase_FMN_N"/>
</dbReference>
<dbReference type="InterPro" id="IPR045247">
    <property type="entry name" value="Oye-like"/>
</dbReference>
<dbReference type="PANTHER" id="PTHR22893">
    <property type="entry name" value="NADH OXIDOREDUCTASE-RELATED"/>
    <property type="match status" value="1"/>
</dbReference>
<dbReference type="PANTHER" id="PTHR22893:SF91">
    <property type="entry name" value="NADPH DEHYDROGENASE 2-RELATED"/>
    <property type="match status" value="1"/>
</dbReference>
<dbReference type="Pfam" id="PF00724">
    <property type="entry name" value="Oxidored_FMN"/>
    <property type="match status" value="1"/>
</dbReference>
<dbReference type="SUPFAM" id="SSF51395">
    <property type="entry name" value="FMN-linked oxidoreductases"/>
    <property type="match status" value="1"/>
</dbReference>
<accession>Q9XG54</accession>
<sequence>MENKVVEEKQVDKIPLMSPCKMGKFELCHRVVLAPLTRQRSYGYIPQPHAILHYSQRSTNGGLLIGEATVISETGIGYKDVPGIWTKEQVEAWKPIVDAVHAKGGIFFCQIWHVGRVSNKDFQPNGEDPISCTDRGLTPQIRSNGIDIAHFTRPRRLTTDEIPQIVNEFRVAARNAIEAGFDGVEIHGAHGYLIDQFMKDQVNDRSDKYGGSLENRCRFALEIVEAVANEIGSDRVGIRISPFAHYNEAGDTNPTALGLYMVESLNKYDLAYCHVVEPRMKTAWEKIECTESLVPMRKAYKGTFIVAGGYDREDGNRALIEDRADLVAYGRLFISNPDLPKRFELNAPLNKYNRDTFYTSDPIVGYTDYPFLETMT</sequence>